<evidence type="ECO:0000255" key="1">
    <source>
        <dbReference type="HAMAP-Rule" id="MF_00739"/>
    </source>
</evidence>
<accession>Q5HDS0</accession>
<proteinExistence type="inferred from homology"/>
<feature type="chain" id="PRO_0000098038" description="Urease subunit gamma">
    <location>
        <begin position="1"/>
        <end position="100"/>
    </location>
</feature>
<dbReference type="EC" id="3.5.1.5" evidence="1"/>
<dbReference type="EMBL" id="CP000046">
    <property type="protein sequence ID" value="AAW38500.1"/>
    <property type="molecule type" value="Genomic_DNA"/>
</dbReference>
<dbReference type="RefSeq" id="WP_000545928.1">
    <property type="nucleotide sequence ID" value="NZ_JBGOFO010000004.1"/>
</dbReference>
<dbReference type="SMR" id="Q5HDS0"/>
<dbReference type="KEGG" id="sac:SACOL2280"/>
<dbReference type="HOGENOM" id="CLU_145825_1_0_9"/>
<dbReference type="UniPathway" id="UPA00258">
    <property type="reaction ID" value="UER00370"/>
</dbReference>
<dbReference type="Proteomes" id="UP000000530">
    <property type="component" value="Chromosome"/>
</dbReference>
<dbReference type="GO" id="GO:0005737">
    <property type="term" value="C:cytoplasm"/>
    <property type="evidence" value="ECO:0007669"/>
    <property type="project" value="UniProtKB-SubCell"/>
</dbReference>
<dbReference type="GO" id="GO:0016151">
    <property type="term" value="F:nickel cation binding"/>
    <property type="evidence" value="ECO:0007669"/>
    <property type="project" value="InterPro"/>
</dbReference>
<dbReference type="GO" id="GO:0009039">
    <property type="term" value="F:urease activity"/>
    <property type="evidence" value="ECO:0007669"/>
    <property type="project" value="UniProtKB-UniRule"/>
</dbReference>
<dbReference type="GO" id="GO:0043419">
    <property type="term" value="P:urea catabolic process"/>
    <property type="evidence" value="ECO:0007669"/>
    <property type="project" value="UniProtKB-UniRule"/>
</dbReference>
<dbReference type="CDD" id="cd00390">
    <property type="entry name" value="Urease_gamma"/>
    <property type="match status" value="1"/>
</dbReference>
<dbReference type="Gene3D" id="3.30.280.10">
    <property type="entry name" value="Urease, gamma-like subunit"/>
    <property type="match status" value="1"/>
</dbReference>
<dbReference type="HAMAP" id="MF_00739">
    <property type="entry name" value="Urease_gamma"/>
    <property type="match status" value="1"/>
</dbReference>
<dbReference type="InterPro" id="IPR012010">
    <property type="entry name" value="Urease_gamma"/>
</dbReference>
<dbReference type="InterPro" id="IPR002026">
    <property type="entry name" value="Urease_gamma/gamma-beta_su"/>
</dbReference>
<dbReference type="InterPro" id="IPR036463">
    <property type="entry name" value="Urease_gamma_sf"/>
</dbReference>
<dbReference type="InterPro" id="IPR050069">
    <property type="entry name" value="Urease_subunit"/>
</dbReference>
<dbReference type="NCBIfam" id="NF009712">
    <property type="entry name" value="PRK13241.1"/>
    <property type="match status" value="1"/>
</dbReference>
<dbReference type="NCBIfam" id="TIGR00193">
    <property type="entry name" value="urease_gam"/>
    <property type="match status" value="1"/>
</dbReference>
<dbReference type="PANTHER" id="PTHR33569">
    <property type="entry name" value="UREASE"/>
    <property type="match status" value="1"/>
</dbReference>
<dbReference type="PANTHER" id="PTHR33569:SF1">
    <property type="entry name" value="UREASE"/>
    <property type="match status" value="1"/>
</dbReference>
<dbReference type="Pfam" id="PF00547">
    <property type="entry name" value="Urease_gamma"/>
    <property type="match status" value="1"/>
</dbReference>
<dbReference type="PIRSF" id="PIRSF001223">
    <property type="entry name" value="Urease_gamma"/>
    <property type="match status" value="1"/>
</dbReference>
<dbReference type="SUPFAM" id="SSF54111">
    <property type="entry name" value="Urease, gamma-subunit"/>
    <property type="match status" value="1"/>
</dbReference>
<organism>
    <name type="scientific">Staphylococcus aureus (strain COL)</name>
    <dbReference type="NCBI Taxonomy" id="93062"/>
    <lineage>
        <taxon>Bacteria</taxon>
        <taxon>Bacillati</taxon>
        <taxon>Bacillota</taxon>
        <taxon>Bacilli</taxon>
        <taxon>Bacillales</taxon>
        <taxon>Staphylococcaceae</taxon>
        <taxon>Staphylococcus</taxon>
    </lineage>
</organism>
<name>URE3_STAAC</name>
<comment type="catalytic activity">
    <reaction evidence="1">
        <text>urea + 2 H2O + H(+) = hydrogencarbonate + 2 NH4(+)</text>
        <dbReference type="Rhea" id="RHEA:20557"/>
        <dbReference type="ChEBI" id="CHEBI:15377"/>
        <dbReference type="ChEBI" id="CHEBI:15378"/>
        <dbReference type="ChEBI" id="CHEBI:16199"/>
        <dbReference type="ChEBI" id="CHEBI:17544"/>
        <dbReference type="ChEBI" id="CHEBI:28938"/>
        <dbReference type="EC" id="3.5.1.5"/>
    </reaction>
</comment>
<comment type="pathway">
    <text evidence="1">Nitrogen metabolism; urea degradation; CO(2) and NH(3) from urea (urease route): step 1/1.</text>
</comment>
<comment type="subunit">
    <text evidence="1">Heterotrimer of UreA (gamma), UreB (beta) and UreC (alpha) subunits. Three heterotrimers associate to form the active enzyme.</text>
</comment>
<comment type="subcellular location">
    <subcellularLocation>
        <location evidence="1">Cytoplasm</location>
    </subcellularLocation>
</comment>
<comment type="similarity">
    <text evidence="1">Belongs to the urease gamma subunit family.</text>
</comment>
<keyword id="KW-0963">Cytoplasm</keyword>
<keyword id="KW-0378">Hydrolase</keyword>
<reference key="1">
    <citation type="journal article" date="2005" name="J. Bacteriol.">
        <title>Insights on evolution of virulence and resistance from the complete genome analysis of an early methicillin-resistant Staphylococcus aureus strain and a biofilm-producing methicillin-resistant Staphylococcus epidermidis strain.</title>
        <authorList>
            <person name="Gill S.R."/>
            <person name="Fouts D.E."/>
            <person name="Archer G.L."/>
            <person name="Mongodin E.F."/>
            <person name="DeBoy R.T."/>
            <person name="Ravel J."/>
            <person name="Paulsen I.T."/>
            <person name="Kolonay J.F."/>
            <person name="Brinkac L.M."/>
            <person name="Beanan M.J."/>
            <person name="Dodson R.J."/>
            <person name="Daugherty S.C."/>
            <person name="Madupu R."/>
            <person name="Angiuoli S.V."/>
            <person name="Durkin A.S."/>
            <person name="Haft D.H."/>
            <person name="Vamathevan J.J."/>
            <person name="Khouri H."/>
            <person name="Utterback T.R."/>
            <person name="Lee C."/>
            <person name="Dimitrov G."/>
            <person name="Jiang L."/>
            <person name="Qin H."/>
            <person name="Weidman J."/>
            <person name="Tran K."/>
            <person name="Kang K.H."/>
            <person name="Hance I.R."/>
            <person name="Nelson K.E."/>
            <person name="Fraser C.M."/>
        </authorList>
    </citation>
    <scope>NUCLEOTIDE SEQUENCE [LARGE SCALE GENOMIC DNA]</scope>
    <source>
        <strain>COL</strain>
    </source>
</reference>
<gene>
    <name evidence="1" type="primary">ureA</name>
    <name type="ordered locus">SACOL2280</name>
</gene>
<protein>
    <recommendedName>
        <fullName evidence="1">Urease subunit gamma</fullName>
        <ecNumber evidence="1">3.5.1.5</ecNumber>
    </recommendedName>
    <alternativeName>
        <fullName evidence="1">Urea amidohydrolase subunit gamma</fullName>
    </alternativeName>
</protein>
<sequence>MHFTQREQDKLMIVVAAEVARRRKARGLKLNHPEALALISDELLEGARDGKTVAELMSYGRQILNKEDVMDGVEHMITDIEIEATFPDGTKLITVHHPIV</sequence>